<gene>
    <name type="primary">csn12</name>
    <name type="ORF">SPAC1B3.08</name>
</gene>
<accession>O13873</accession>
<comment type="similarity">
    <text evidence="2">Belongs to the CSN12 family.</text>
</comment>
<protein>
    <recommendedName>
        <fullName>Protein CSN12 homolog</fullName>
    </recommendedName>
</protein>
<proteinExistence type="inferred from homology"/>
<organism>
    <name type="scientific">Schizosaccharomyces pombe (strain 972 / ATCC 24843)</name>
    <name type="common">Fission yeast</name>
    <dbReference type="NCBI Taxonomy" id="284812"/>
    <lineage>
        <taxon>Eukaryota</taxon>
        <taxon>Fungi</taxon>
        <taxon>Dikarya</taxon>
        <taxon>Ascomycota</taxon>
        <taxon>Taphrinomycotina</taxon>
        <taxon>Schizosaccharomycetes</taxon>
        <taxon>Schizosaccharomycetales</taxon>
        <taxon>Schizosaccharomycetaceae</taxon>
        <taxon>Schizosaccharomyces</taxon>
    </lineage>
</organism>
<keyword id="KW-1185">Reference proteome</keyword>
<evidence type="ECO:0000255" key="1">
    <source>
        <dbReference type="PROSITE-ProRule" id="PRU01185"/>
    </source>
</evidence>
<evidence type="ECO:0000305" key="2"/>
<sequence>MSERPLPLNVYFSTINSAVARSNSVLLAKNLSIPWGKTLTSVLNFDIPGTYSSDDVLKLTVERSISKNWTDIVLLHLQVLLYLVRDHDPAAAFKQQTELAQHLYREFSSGRCTGVHLPVLFIVCKDLRFLAINAHNAMLRRKQQLKVISVDESEENEQLEATARLINRAFTICINDRAPLSTSRKWGAYYIMGLLFKLYLRLDCVHLTNNVLRAMKVVELPDISLFPKSHVVIFHYYLGIVAFLNQNYKNASAELEIAFSLCHKGYNRNLELILSYWIPTRILVNHQLPTKNLLSKFPNLASVYIPLTRALKSGNLGEFGKCLQKNETLLAKTKIYLTLEGTRDLCIRNLFRKTWIICGKSTRLPVSVFQIALQVAGTDLPKLHVEAILANMISKGYMRGYISRNFETVVLSAKDPFPKNVST</sequence>
<dbReference type="EMBL" id="CU329670">
    <property type="protein sequence ID" value="CAB11237.1"/>
    <property type="molecule type" value="Genomic_DNA"/>
</dbReference>
<dbReference type="PIR" id="T38026">
    <property type="entry name" value="T38026"/>
</dbReference>
<dbReference type="RefSeq" id="NP_594792.1">
    <property type="nucleotide sequence ID" value="NM_001020220.2"/>
</dbReference>
<dbReference type="SMR" id="O13873"/>
<dbReference type="BioGRID" id="278986">
    <property type="interactions" value="33"/>
</dbReference>
<dbReference type="FunCoup" id="O13873">
    <property type="interactions" value="590"/>
</dbReference>
<dbReference type="STRING" id="284812.O13873"/>
<dbReference type="iPTMnet" id="O13873"/>
<dbReference type="PaxDb" id="4896-SPAC1B3.08.1"/>
<dbReference type="EnsemblFungi" id="SPAC1B3.08.1">
    <property type="protein sequence ID" value="SPAC1B3.08.1:pep"/>
    <property type="gene ID" value="SPAC1B3.08"/>
</dbReference>
<dbReference type="KEGG" id="spo:2542528"/>
<dbReference type="PomBase" id="SPAC1B3.08"/>
<dbReference type="VEuPathDB" id="FungiDB:SPAC1B3.08"/>
<dbReference type="eggNOG" id="KOG2688">
    <property type="taxonomic scope" value="Eukaryota"/>
</dbReference>
<dbReference type="HOGENOM" id="CLU_031567_2_1_1"/>
<dbReference type="InParanoid" id="O13873"/>
<dbReference type="OMA" id="INRMFTL"/>
<dbReference type="PhylomeDB" id="O13873"/>
<dbReference type="PRO" id="PR:O13873"/>
<dbReference type="Proteomes" id="UP000002485">
    <property type="component" value="Chromosome I"/>
</dbReference>
<dbReference type="GO" id="GO:0005829">
    <property type="term" value="C:cytosol"/>
    <property type="evidence" value="ECO:0007005"/>
    <property type="project" value="PomBase"/>
</dbReference>
<dbReference type="GO" id="GO:0005634">
    <property type="term" value="C:nucleus"/>
    <property type="evidence" value="ECO:0007005"/>
    <property type="project" value="PomBase"/>
</dbReference>
<dbReference type="GO" id="GO:0003690">
    <property type="term" value="F:double-stranded DNA binding"/>
    <property type="evidence" value="ECO:0000318"/>
    <property type="project" value="GO_Central"/>
</dbReference>
<dbReference type="GO" id="GO:0003723">
    <property type="term" value="F:RNA binding"/>
    <property type="evidence" value="ECO:0000318"/>
    <property type="project" value="GO_Central"/>
</dbReference>
<dbReference type="Gene3D" id="1.10.10.10">
    <property type="entry name" value="Winged helix-like DNA-binding domain superfamily/Winged helix DNA-binding domain"/>
    <property type="match status" value="1"/>
</dbReference>
<dbReference type="InterPro" id="IPR045114">
    <property type="entry name" value="Csn12-like"/>
</dbReference>
<dbReference type="InterPro" id="IPR000717">
    <property type="entry name" value="PCI_dom"/>
</dbReference>
<dbReference type="InterPro" id="IPR036388">
    <property type="entry name" value="WH-like_DNA-bd_sf"/>
</dbReference>
<dbReference type="PANTHER" id="PTHR12732:SF0">
    <property type="entry name" value="PCI DOMAIN-CONTAINING PROTEIN 2"/>
    <property type="match status" value="1"/>
</dbReference>
<dbReference type="PANTHER" id="PTHR12732">
    <property type="entry name" value="UNCHARACTERIZED PROTEASOME COMPONENT REGION PCI-CONTAINING"/>
    <property type="match status" value="1"/>
</dbReference>
<dbReference type="Pfam" id="PF01399">
    <property type="entry name" value="PCI"/>
    <property type="match status" value="1"/>
</dbReference>
<dbReference type="SMART" id="SM00753">
    <property type="entry name" value="PAM"/>
    <property type="match status" value="1"/>
</dbReference>
<dbReference type="PROSITE" id="PS50250">
    <property type="entry name" value="PCI"/>
    <property type="match status" value="1"/>
</dbReference>
<name>CSN12_SCHPO</name>
<reference key="1">
    <citation type="journal article" date="2002" name="Nature">
        <title>The genome sequence of Schizosaccharomyces pombe.</title>
        <authorList>
            <person name="Wood V."/>
            <person name="Gwilliam R."/>
            <person name="Rajandream M.A."/>
            <person name="Lyne M.H."/>
            <person name="Lyne R."/>
            <person name="Stewart A."/>
            <person name="Sgouros J.G."/>
            <person name="Peat N."/>
            <person name="Hayles J."/>
            <person name="Baker S.G."/>
            <person name="Basham D."/>
            <person name="Bowman S."/>
            <person name="Brooks K."/>
            <person name="Brown D."/>
            <person name="Brown S."/>
            <person name="Chillingworth T."/>
            <person name="Churcher C.M."/>
            <person name="Collins M."/>
            <person name="Connor R."/>
            <person name="Cronin A."/>
            <person name="Davis P."/>
            <person name="Feltwell T."/>
            <person name="Fraser A."/>
            <person name="Gentles S."/>
            <person name="Goble A."/>
            <person name="Hamlin N."/>
            <person name="Harris D.E."/>
            <person name="Hidalgo J."/>
            <person name="Hodgson G."/>
            <person name="Holroyd S."/>
            <person name="Hornsby T."/>
            <person name="Howarth S."/>
            <person name="Huckle E.J."/>
            <person name="Hunt S."/>
            <person name="Jagels K."/>
            <person name="James K.D."/>
            <person name="Jones L."/>
            <person name="Jones M."/>
            <person name="Leather S."/>
            <person name="McDonald S."/>
            <person name="McLean J."/>
            <person name="Mooney P."/>
            <person name="Moule S."/>
            <person name="Mungall K.L."/>
            <person name="Murphy L.D."/>
            <person name="Niblett D."/>
            <person name="Odell C."/>
            <person name="Oliver K."/>
            <person name="O'Neil S."/>
            <person name="Pearson D."/>
            <person name="Quail M.A."/>
            <person name="Rabbinowitsch E."/>
            <person name="Rutherford K.M."/>
            <person name="Rutter S."/>
            <person name="Saunders D."/>
            <person name="Seeger K."/>
            <person name="Sharp S."/>
            <person name="Skelton J."/>
            <person name="Simmonds M.N."/>
            <person name="Squares R."/>
            <person name="Squares S."/>
            <person name="Stevens K."/>
            <person name="Taylor K."/>
            <person name="Taylor R.G."/>
            <person name="Tivey A."/>
            <person name="Walsh S.V."/>
            <person name="Warren T."/>
            <person name="Whitehead S."/>
            <person name="Woodward J.R."/>
            <person name="Volckaert G."/>
            <person name="Aert R."/>
            <person name="Robben J."/>
            <person name="Grymonprez B."/>
            <person name="Weltjens I."/>
            <person name="Vanstreels E."/>
            <person name="Rieger M."/>
            <person name="Schaefer M."/>
            <person name="Mueller-Auer S."/>
            <person name="Gabel C."/>
            <person name="Fuchs M."/>
            <person name="Duesterhoeft A."/>
            <person name="Fritzc C."/>
            <person name="Holzer E."/>
            <person name="Moestl D."/>
            <person name="Hilbert H."/>
            <person name="Borzym K."/>
            <person name="Langer I."/>
            <person name="Beck A."/>
            <person name="Lehrach H."/>
            <person name="Reinhardt R."/>
            <person name="Pohl T.M."/>
            <person name="Eger P."/>
            <person name="Zimmermann W."/>
            <person name="Wedler H."/>
            <person name="Wambutt R."/>
            <person name="Purnelle B."/>
            <person name="Goffeau A."/>
            <person name="Cadieu E."/>
            <person name="Dreano S."/>
            <person name="Gloux S."/>
            <person name="Lelaure V."/>
            <person name="Mottier S."/>
            <person name="Galibert F."/>
            <person name="Aves S.J."/>
            <person name="Xiang Z."/>
            <person name="Hunt C."/>
            <person name="Moore K."/>
            <person name="Hurst S.M."/>
            <person name="Lucas M."/>
            <person name="Rochet M."/>
            <person name="Gaillardin C."/>
            <person name="Tallada V.A."/>
            <person name="Garzon A."/>
            <person name="Thode G."/>
            <person name="Daga R.R."/>
            <person name="Cruzado L."/>
            <person name="Jimenez J."/>
            <person name="Sanchez M."/>
            <person name="del Rey F."/>
            <person name="Benito J."/>
            <person name="Dominguez A."/>
            <person name="Revuelta J.L."/>
            <person name="Moreno S."/>
            <person name="Armstrong J."/>
            <person name="Forsburg S.L."/>
            <person name="Cerutti L."/>
            <person name="Lowe T."/>
            <person name="McCombie W.R."/>
            <person name="Paulsen I."/>
            <person name="Potashkin J."/>
            <person name="Shpakovski G.V."/>
            <person name="Ussery D."/>
            <person name="Barrell B.G."/>
            <person name="Nurse P."/>
        </authorList>
    </citation>
    <scope>NUCLEOTIDE SEQUENCE [LARGE SCALE GENOMIC DNA]</scope>
    <source>
        <strain>972 / ATCC 24843</strain>
    </source>
</reference>
<feature type="chain" id="PRO_0000121044" description="Protein CSN12 homolog">
    <location>
        <begin position="1"/>
        <end position="423"/>
    </location>
</feature>
<feature type="domain" description="PCI" evidence="1">
    <location>
        <begin position="232"/>
        <end position="416"/>
    </location>
</feature>